<comment type="function">
    <text evidence="1">Exhibits a very high intrinsic GTPase hydrolysis rate. Involved in the addition of a carboxymethylaminomethyl (cmnm) group at the wobble position (U34) of certain tRNAs, forming tRNA-cmnm(5)s(2)U34.</text>
</comment>
<comment type="cofactor">
    <cofactor evidence="1">
        <name>K(+)</name>
        <dbReference type="ChEBI" id="CHEBI:29103"/>
    </cofactor>
    <text evidence="1">Binds 1 potassium ion per subunit.</text>
</comment>
<comment type="subunit">
    <text evidence="1">Homodimer. Heterotetramer of two MnmE and two MnmG subunits.</text>
</comment>
<comment type="subcellular location">
    <subcellularLocation>
        <location evidence="1">Cytoplasm</location>
    </subcellularLocation>
</comment>
<comment type="similarity">
    <text evidence="1">Belongs to the TRAFAC class TrmE-Era-EngA-EngB-Septin-like GTPase superfamily. TrmE GTPase family.</text>
</comment>
<name>MNME_HELPY</name>
<sequence length="461" mass="51170">MKNTSSSTTLTMNDTIAAIATPLGKGAISIIKISGHNALNILKQLTQKQDFTPRYAYVHDIFSNGVLLDKALVIYFKAPYSFTGEDVCEIQCHGSPLLAQNILQACLNLGARLAKAGEFSKKAFLNHKMDLSEIEASVQLILCEDESVLNALARQLKGELKIFIEEARGNLLKLLASSEVLIDYSEEDIPSDFLDGVSLNLEKQIASFKDLLDFSNAQKQRNKGHALSIVGKPNAGKSSLLNAMLLEERALVSDIKGTTRDTIEEVIELKGHKVRLIDTAGIRESADKIERLGIEKSLKSLENCDIILGVFDLSKPLEKEDFNLIDTLNRAKKPCIVVLNKNDLAPKLELEILKSYLKIPYTLLETNTLNSKACLKDLSQKISAFFPKLDTQNKLLLTSLAQKIALENAITELQNAKNHLETLELFSYHILSAIENLNLLTRPYETSQMLDSMFSEFCLGK</sequence>
<reference key="1">
    <citation type="journal article" date="1997" name="Nature">
        <title>The complete genome sequence of the gastric pathogen Helicobacter pylori.</title>
        <authorList>
            <person name="Tomb J.-F."/>
            <person name="White O."/>
            <person name="Kerlavage A.R."/>
            <person name="Clayton R.A."/>
            <person name="Sutton G.G."/>
            <person name="Fleischmann R.D."/>
            <person name="Ketchum K.A."/>
            <person name="Klenk H.-P."/>
            <person name="Gill S.R."/>
            <person name="Dougherty B.A."/>
            <person name="Nelson K.E."/>
            <person name="Quackenbush J."/>
            <person name="Zhou L."/>
            <person name="Kirkness E.F."/>
            <person name="Peterson S.N."/>
            <person name="Loftus B.J."/>
            <person name="Richardson D.L."/>
            <person name="Dodson R.J."/>
            <person name="Khalak H.G."/>
            <person name="Glodek A."/>
            <person name="McKenney K."/>
            <person name="FitzGerald L.M."/>
            <person name="Lee N."/>
            <person name="Adams M.D."/>
            <person name="Hickey E.K."/>
            <person name="Berg D.E."/>
            <person name="Gocayne J.D."/>
            <person name="Utterback T.R."/>
            <person name="Peterson J.D."/>
            <person name="Kelley J.M."/>
            <person name="Cotton M.D."/>
            <person name="Weidman J.F."/>
            <person name="Fujii C."/>
            <person name="Bowman C."/>
            <person name="Watthey L."/>
            <person name="Wallin E."/>
            <person name="Hayes W.S."/>
            <person name="Borodovsky M."/>
            <person name="Karp P.D."/>
            <person name="Smith H.O."/>
            <person name="Fraser C.M."/>
            <person name="Venter J.C."/>
        </authorList>
    </citation>
    <scope>NUCLEOTIDE SEQUENCE [LARGE SCALE GENOMIC DNA]</scope>
    <source>
        <strain>ATCC 700392 / 26695</strain>
    </source>
</reference>
<protein>
    <recommendedName>
        <fullName evidence="1">tRNA modification GTPase MnmE</fullName>
        <ecNumber evidence="1">3.6.-.-</ecNumber>
    </recommendedName>
</protein>
<evidence type="ECO:0000255" key="1">
    <source>
        <dbReference type="HAMAP-Rule" id="MF_00379"/>
    </source>
</evidence>
<feature type="chain" id="PRO_0000188882" description="tRNA modification GTPase MnmE">
    <location>
        <begin position="1"/>
        <end position="461"/>
    </location>
</feature>
<feature type="domain" description="TrmE-type G">
    <location>
        <begin position="224"/>
        <end position="387"/>
    </location>
</feature>
<feature type="binding site" evidence="1">
    <location>
        <position position="32"/>
    </location>
    <ligand>
        <name>(6S)-5-formyl-5,6,7,8-tetrahydrofolate</name>
        <dbReference type="ChEBI" id="CHEBI:57457"/>
    </ligand>
</feature>
<feature type="binding site" evidence="1">
    <location>
        <position position="89"/>
    </location>
    <ligand>
        <name>(6S)-5-formyl-5,6,7,8-tetrahydrofolate</name>
        <dbReference type="ChEBI" id="CHEBI:57457"/>
    </ligand>
</feature>
<feature type="binding site" evidence="1">
    <location>
        <position position="128"/>
    </location>
    <ligand>
        <name>(6S)-5-formyl-5,6,7,8-tetrahydrofolate</name>
        <dbReference type="ChEBI" id="CHEBI:57457"/>
    </ligand>
</feature>
<feature type="binding site" evidence="1">
    <location>
        <begin position="234"/>
        <end position="239"/>
    </location>
    <ligand>
        <name>GTP</name>
        <dbReference type="ChEBI" id="CHEBI:37565"/>
    </ligand>
</feature>
<feature type="binding site" evidence="1">
    <location>
        <position position="234"/>
    </location>
    <ligand>
        <name>K(+)</name>
        <dbReference type="ChEBI" id="CHEBI:29103"/>
    </ligand>
</feature>
<feature type="binding site" evidence="1">
    <location>
        <position position="238"/>
    </location>
    <ligand>
        <name>Mg(2+)</name>
        <dbReference type="ChEBI" id="CHEBI:18420"/>
    </ligand>
</feature>
<feature type="binding site" evidence="1">
    <location>
        <begin position="253"/>
        <end position="259"/>
    </location>
    <ligand>
        <name>GTP</name>
        <dbReference type="ChEBI" id="CHEBI:37565"/>
    </ligand>
</feature>
<feature type="binding site" evidence="1">
    <location>
        <position position="253"/>
    </location>
    <ligand>
        <name>K(+)</name>
        <dbReference type="ChEBI" id="CHEBI:29103"/>
    </ligand>
</feature>
<feature type="binding site" evidence="1">
    <location>
        <position position="255"/>
    </location>
    <ligand>
        <name>K(+)</name>
        <dbReference type="ChEBI" id="CHEBI:29103"/>
    </ligand>
</feature>
<feature type="binding site" evidence="1">
    <location>
        <position position="258"/>
    </location>
    <ligand>
        <name>K(+)</name>
        <dbReference type="ChEBI" id="CHEBI:29103"/>
    </ligand>
</feature>
<feature type="binding site" evidence="1">
    <location>
        <position position="259"/>
    </location>
    <ligand>
        <name>Mg(2+)</name>
        <dbReference type="ChEBI" id="CHEBI:18420"/>
    </ligand>
</feature>
<feature type="binding site" evidence="1">
    <location>
        <begin position="278"/>
        <end position="281"/>
    </location>
    <ligand>
        <name>GTP</name>
        <dbReference type="ChEBI" id="CHEBI:37565"/>
    </ligand>
</feature>
<feature type="binding site" evidence="1">
    <location>
        <position position="461"/>
    </location>
    <ligand>
        <name>(6S)-5-formyl-5,6,7,8-tetrahydrofolate</name>
        <dbReference type="ChEBI" id="CHEBI:57457"/>
    </ligand>
</feature>
<dbReference type="EC" id="3.6.-.-" evidence="1"/>
<dbReference type="EMBL" id="AE000511">
    <property type="protein sequence ID" value="AAD08492.1"/>
    <property type="molecule type" value="Genomic_DNA"/>
</dbReference>
<dbReference type="PIR" id="D64701">
    <property type="entry name" value="D64701"/>
</dbReference>
<dbReference type="RefSeq" id="NP_208243.1">
    <property type="nucleotide sequence ID" value="NC_000915.1"/>
</dbReference>
<dbReference type="SMR" id="O25991"/>
<dbReference type="DIP" id="DIP-3365N"/>
<dbReference type="FunCoup" id="O25991">
    <property type="interactions" value="371"/>
</dbReference>
<dbReference type="IntAct" id="O25991">
    <property type="interactions" value="3"/>
</dbReference>
<dbReference type="MINT" id="O25991"/>
<dbReference type="STRING" id="85962.HP_1452"/>
<dbReference type="PaxDb" id="85962-C694_07520"/>
<dbReference type="EnsemblBacteria" id="AAD08492">
    <property type="protein sequence ID" value="AAD08492"/>
    <property type="gene ID" value="HP_1452"/>
</dbReference>
<dbReference type="KEGG" id="hpy:HP_1452"/>
<dbReference type="PATRIC" id="fig|85962.8.peg.1524"/>
<dbReference type="eggNOG" id="COG0486">
    <property type="taxonomic scope" value="Bacteria"/>
</dbReference>
<dbReference type="InParanoid" id="O25991"/>
<dbReference type="OrthoDB" id="9805918at2"/>
<dbReference type="PhylomeDB" id="O25991"/>
<dbReference type="Proteomes" id="UP000000429">
    <property type="component" value="Chromosome"/>
</dbReference>
<dbReference type="GO" id="GO:0005737">
    <property type="term" value="C:cytoplasm"/>
    <property type="evidence" value="ECO:0000318"/>
    <property type="project" value="GO_Central"/>
</dbReference>
<dbReference type="GO" id="GO:0005829">
    <property type="term" value="C:cytosol"/>
    <property type="evidence" value="ECO:0000318"/>
    <property type="project" value="GO_Central"/>
</dbReference>
<dbReference type="GO" id="GO:0005525">
    <property type="term" value="F:GTP binding"/>
    <property type="evidence" value="ECO:0007669"/>
    <property type="project" value="UniProtKB-UniRule"/>
</dbReference>
<dbReference type="GO" id="GO:0003924">
    <property type="term" value="F:GTPase activity"/>
    <property type="evidence" value="ECO:0007669"/>
    <property type="project" value="UniProtKB-UniRule"/>
</dbReference>
<dbReference type="GO" id="GO:0046872">
    <property type="term" value="F:metal ion binding"/>
    <property type="evidence" value="ECO:0007669"/>
    <property type="project" value="UniProtKB-KW"/>
</dbReference>
<dbReference type="GO" id="GO:0030488">
    <property type="term" value="P:tRNA methylation"/>
    <property type="evidence" value="ECO:0000318"/>
    <property type="project" value="GO_Central"/>
</dbReference>
<dbReference type="GO" id="GO:0002098">
    <property type="term" value="P:tRNA wobble uridine modification"/>
    <property type="evidence" value="ECO:0000318"/>
    <property type="project" value="GO_Central"/>
</dbReference>
<dbReference type="CDD" id="cd04164">
    <property type="entry name" value="trmE"/>
    <property type="match status" value="1"/>
</dbReference>
<dbReference type="CDD" id="cd14858">
    <property type="entry name" value="TrmE_N"/>
    <property type="match status" value="1"/>
</dbReference>
<dbReference type="FunFam" id="3.30.1360.120:FF:000003">
    <property type="entry name" value="tRNA modification GTPase MnmE"/>
    <property type="match status" value="1"/>
</dbReference>
<dbReference type="FunFam" id="3.40.50.300:FF:001376">
    <property type="entry name" value="tRNA modification GTPase MnmE"/>
    <property type="match status" value="1"/>
</dbReference>
<dbReference type="Gene3D" id="3.40.50.300">
    <property type="entry name" value="P-loop containing nucleotide triphosphate hydrolases"/>
    <property type="match status" value="1"/>
</dbReference>
<dbReference type="Gene3D" id="3.30.1360.120">
    <property type="entry name" value="Probable tRNA modification gtpase trme, domain 1"/>
    <property type="match status" value="1"/>
</dbReference>
<dbReference type="Gene3D" id="1.20.120.430">
    <property type="entry name" value="tRNA modification GTPase MnmE domain 2"/>
    <property type="match status" value="1"/>
</dbReference>
<dbReference type="HAMAP" id="MF_00379">
    <property type="entry name" value="GTPase_MnmE"/>
    <property type="match status" value="1"/>
</dbReference>
<dbReference type="InterPro" id="IPR031168">
    <property type="entry name" value="G_TrmE"/>
</dbReference>
<dbReference type="InterPro" id="IPR006073">
    <property type="entry name" value="GTP-bd"/>
</dbReference>
<dbReference type="InterPro" id="IPR018948">
    <property type="entry name" value="GTP-bd_TrmE_N"/>
</dbReference>
<dbReference type="InterPro" id="IPR004520">
    <property type="entry name" value="GTPase_MnmE"/>
</dbReference>
<dbReference type="InterPro" id="IPR027368">
    <property type="entry name" value="MnmE_dom2"/>
</dbReference>
<dbReference type="InterPro" id="IPR025867">
    <property type="entry name" value="MnmE_helical"/>
</dbReference>
<dbReference type="InterPro" id="IPR027417">
    <property type="entry name" value="P-loop_NTPase"/>
</dbReference>
<dbReference type="InterPro" id="IPR005225">
    <property type="entry name" value="Small_GTP-bd"/>
</dbReference>
<dbReference type="InterPro" id="IPR027266">
    <property type="entry name" value="TrmE/GcvT_dom1"/>
</dbReference>
<dbReference type="NCBIfam" id="TIGR00450">
    <property type="entry name" value="mnmE_trmE_thdF"/>
    <property type="match status" value="1"/>
</dbReference>
<dbReference type="NCBIfam" id="TIGR00231">
    <property type="entry name" value="small_GTP"/>
    <property type="match status" value="1"/>
</dbReference>
<dbReference type="PANTHER" id="PTHR42714">
    <property type="entry name" value="TRNA MODIFICATION GTPASE GTPBP3"/>
    <property type="match status" value="1"/>
</dbReference>
<dbReference type="PANTHER" id="PTHR42714:SF2">
    <property type="entry name" value="TRNA MODIFICATION GTPASE GTPBP3, MITOCHONDRIAL"/>
    <property type="match status" value="1"/>
</dbReference>
<dbReference type="Pfam" id="PF01926">
    <property type="entry name" value="MMR_HSR1"/>
    <property type="match status" value="1"/>
</dbReference>
<dbReference type="Pfam" id="PF12631">
    <property type="entry name" value="MnmE_helical"/>
    <property type="match status" value="1"/>
</dbReference>
<dbReference type="Pfam" id="PF10396">
    <property type="entry name" value="TrmE_N"/>
    <property type="match status" value="1"/>
</dbReference>
<dbReference type="SUPFAM" id="SSF52540">
    <property type="entry name" value="P-loop containing nucleoside triphosphate hydrolases"/>
    <property type="match status" value="1"/>
</dbReference>
<dbReference type="PROSITE" id="PS51709">
    <property type="entry name" value="G_TRME"/>
    <property type="match status" value="1"/>
</dbReference>
<gene>
    <name evidence="1" type="primary">mnmE</name>
    <name evidence="1" type="synonym">thdF</name>
    <name evidence="1" type="synonym">trmE</name>
    <name type="ordered locus">HP_1452</name>
</gene>
<proteinExistence type="inferred from homology"/>
<accession>O25991</accession>
<keyword id="KW-0963">Cytoplasm</keyword>
<keyword id="KW-0342">GTP-binding</keyword>
<keyword id="KW-0378">Hydrolase</keyword>
<keyword id="KW-0460">Magnesium</keyword>
<keyword id="KW-0479">Metal-binding</keyword>
<keyword id="KW-0547">Nucleotide-binding</keyword>
<keyword id="KW-0630">Potassium</keyword>
<keyword id="KW-1185">Reference proteome</keyword>
<keyword id="KW-0819">tRNA processing</keyword>
<organism>
    <name type="scientific">Helicobacter pylori (strain ATCC 700392 / 26695)</name>
    <name type="common">Campylobacter pylori</name>
    <dbReference type="NCBI Taxonomy" id="85962"/>
    <lineage>
        <taxon>Bacteria</taxon>
        <taxon>Pseudomonadati</taxon>
        <taxon>Campylobacterota</taxon>
        <taxon>Epsilonproteobacteria</taxon>
        <taxon>Campylobacterales</taxon>
        <taxon>Helicobacteraceae</taxon>
        <taxon>Helicobacter</taxon>
    </lineage>
</organism>